<sequence>MSEVQGTVEFSVELHKFYNVDLFQRGYYQIRVTLKVSSRIPHRLSASIVGQSESSSLHSACVHESAVHSRVFQILYRNEEVSINDAMLFRVHLLLDGERVEDALSEVEFQLKVDLHFTDSEQQLRDVTGTPMISSRTLGLHFHPRRGLHHQVPVMFDYFHLSVISVAIHAALVALQQPLISFTRPGRGSWLGKGGPDTGPEQPTISLENLVFGAGYCKPTSSEGSFYVPSENCIQHAHKWHRDLCLLLLHAYQGLRLYFLVIMRDIPELPTMELEALAVEETLSQLCSELQMLNNPEKIAEQISKDLAWLASHLMALWTQFLDTVTLHSQVTTYLTQEHHTLRVRRFSEAFFYMEHQKLAVLTFQENLIQTHSQLSLDIRNSEYLTSMPPLPAECLDIDGDWNTLPVIFEDRYVDCPVSGHNLSVYPNFDVPVTSPAIMNLKGKEKNLINQNSSSRKDIPLSTTEAPQLGSDEDVTRRPEVQENVSTWNPIDVCSESQVYLTIGEFQNRAGIPEDECWTGPRPDAVKDSLTDTDICSRSPGPDEGQTPALTYIDVQSSNKYCPRAELVQGINVQHEHRSSRESYGIVKTVPSKVVAGTSQNNSTSLNQTAALELRTLGRGVNQDGKPVLLSLKLTPAEPCDPPSTALREALDTKPSQPDHAEEPEDLSALSGVIKRSASIISDSGIESEPSSVAWSEARSRALELPSDRDVLHQVVRRHAHHRNSLEGGHTESNTSLPSGIQASLSSISSLPFEEEERELALNKLTKSVSAPQISSPEESAEGADTIKNTAGFSEDLDPSSKENSPPRHTSLSYGGSRVQDVRAGHSLADIALDSDRPQGPGYMDIPNDKGNHPELQEPCCLDGMAETPLHVETKGLNLKIPCTIVLENSKSRSFHRAAGETAKGKPEELSMSKCVLSNNSISEVRAASHHRVPEISCSPAVEAVNLNSTGVQNSSLSVNDTMTLNRRHNASLEAKHEAGTVCPTVTHTIASQVSRNQELKTGTSISGSHLNSTEAFTLDSLKAVEVVNLSVSCTATCLPFSSVPKETPARAGLSSKQNPAPITHQPLGSFGVVSTYSSKLEEEVSERMFSFYQAKEKFKKELKIEGFLYSDLSVLASDIPYFPPEEEEENLEDGIHLVVCVHGLDGNSADLRLVKTFIELGLPGGKLDFLMSEKNQTDTFADFDTMTDRLLDEIIQHIQLYNLSISRISFIGHSLGNIIIRSVLTRPRFRYYLNKLHTFLSLSGPHLGTLYNNSTLVSTGLWLMQKLKKSGSLLQLTFRDNADLRKCFLYQLSQKTGLQYFKNVVLVASPQDRYVPFHSARIEMCKTALKDRHTGPVYAEMINNLLGPLVEAKDCTLIRHNVFHALPNTANTLIGRAAHIAVLDSELFLEKFFLVAGLNYFK</sequence>
<name>F135B_MOUSE</name>
<keyword id="KW-0597">Phosphoprotein</keyword>
<keyword id="KW-1185">Reference proteome</keyword>
<protein>
    <recommendedName>
        <fullName>Protein FAM135B</fullName>
    </recommendedName>
</protein>
<proteinExistence type="evidence at protein level"/>
<reference key="1">
    <citation type="journal article" date="2009" name="PLoS Biol.">
        <title>Lineage-specific biology revealed by a finished genome assembly of the mouse.</title>
        <authorList>
            <person name="Church D.M."/>
            <person name="Goodstadt L."/>
            <person name="Hillier L.W."/>
            <person name="Zody M.C."/>
            <person name="Goldstein S."/>
            <person name="She X."/>
            <person name="Bult C.J."/>
            <person name="Agarwala R."/>
            <person name="Cherry J.L."/>
            <person name="DiCuccio M."/>
            <person name="Hlavina W."/>
            <person name="Kapustin Y."/>
            <person name="Meric P."/>
            <person name="Maglott D."/>
            <person name="Birtle Z."/>
            <person name="Marques A.C."/>
            <person name="Graves T."/>
            <person name="Zhou S."/>
            <person name="Teague B."/>
            <person name="Potamousis K."/>
            <person name="Churas C."/>
            <person name="Place M."/>
            <person name="Herschleb J."/>
            <person name="Runnheim R."/>
            <person name="Forrest D."/>
            <person name="Amos-Landgraf J."/>
            <person name="Schwartz D.C."/>
            <person name="Cheng Z."/>
            <person name="Lindblad-Toh K."/>
            <person name="Eichler E.E."/>
            <person name="Ponting C.P."/>
        </authorList>
    </citation>
    <scope>NUCLEOTIDE SEQUENCE [LARGE SCALE GENOMIC DNA]</scope>
    <source>
        <strain>C57BL/6J</strain>
    </source>
</reference>
<reference key="2">
    <citation type="journal article" date="2005" name="Science">
        <title>The transcriptional landscape of the mammalian genome.</title>
        <authorList>
            <person name="Carninci P."/>
            <person name="Kasukawa T."/>
            <person name="Katayama S."/>
            <person name="Gough J."/>
            <person name="Frith M.C."/>
            <person name="Maeda N."/>
            <person name="Oyama R."/>
            <person name="Ravasi T."/>
            <person name="Lenhard B."/>
            <person name="Wells C."/>
            <person name="Kodzius R."/>
            <person name="Shimokawa K."/>
            <person name="Bajic V.B."/>
            <person name="Brenner S.E."/>
            <person name="Batalov S."/>
            <person name="Forrest A.R."/>
            <person name="Zavolan M."/>
            <person name="Davis M.J."/>
            <person name="Wilming L.G."/>
            <person name="Aidinis V."/>
            <person name="Allen J.E."/>
            <person name="Ambesi-Impiombato A."/>
            <person name="Apweiler R."/>
            <person name="Aturaliya R.N."/>
            <person name="Bailey T.L."/>
            <person name="Bansal M."/>
            <person name="Baxter L."/>
            <person name="Beisel K.W."/>
            <person name="Bersano T."/>
            <person name="Bono H."/>
            <person name="Chalk A.M."/>
            <person name="Chiu K.P."/>
            <person name="Choudhary V."/>
            <person name="Christoffels A."/>
            <person name="Clutterbuck D.R."/>
            <person name="Crowe M.L."/>
            <person name="Dalla E."/>
            <person name="Dalrymple B.P."/>
            <person name="de Bono B."/>
            <person name="Della Gatta G."/>
            <person name="di Bernardo D."/>
            <person name="Down T."/>
            <person name="Engstrom P."/>
            <person name="Fagiolini M."/>
            <person name="Faulkner G."/>
            <person name="Fletcher C.F."/>
            <person name="Fukushima T."/>
            <person name="Furuno M."/>
            <person name="Futaki S."/>
            <person name="Gariboldi M."/>
            <person name="Georgii-Hemming P."/>
            <person name="Gingeras T.R."/>
            <person name="Gojobori T."/>
            <person name="Green R.E."/>
            <person name="Gustincich S."/>
            <person name="Harbers M."/>
            <person name="Hayashi Y."/>
            <person name="Hensch T.K."/>
            <person name="Hirokawa N."/>
            <person name="Hill D."/>
            <person name="Huminiecki L."/>
            <person name="Iacono M."/>
            <person name="Ikeo K."/>
            <person name="Iwama A."/>
            <person name="Ishikawa T."/>
            <person name="Jakt M."/>
            <person name="Kanapin A."/>
            <person name="Katoh M."/>
            <person name="Kawasawa Y."/>
            <person name="Kelso J."/>
            <person name="Kitamura H."/>
            <person name="Kitano H."/>
            <person name="Kollias G."/>
            <person name="Krishnan S.P."/>
            <person name="Kruger A."/>
            <person name="Kummerfeld S.K."/>
            <person name="Kurochkin I.V."/>
            <person name="Lareau L.F."/>
            <person name="Lazarevic D."/>
            <person name="Lipovich L."/>
            <person name="Liu J."/>
            <person name="Liuni S."/>
            <person name="McWilliam S."/>
            <person name="Madan Babu M."/>
            <person name="Madera M."/>
            <person name="Marchionni L."/>
            <person name="Matsuda H."/>
            <person name="Matsuzawa S."/>
            <person name="Miki H."/>
            <person name="Mignone F."/>
            <person name="Miyake S."/>
            <person name="Morris K."/>
            <person name="Mottagui-Tabar S."/>
            <person name="Mulder N."/>
            <person name="Nakano N."/>
            <person name="Nakauchi H."/>
            <person name="Ng P."/>
            <person name="Nilsson R."/>
            <person name="Nishiguchi S."/>
            <person name="Nishikawa S."/>
            <person name="Nori F."/>
            <person name="Ohara O."/>
            <person name="Okazaki Y."/>
            <person name="Orlando V."/>
            <person name="Pang K.C."/>
            <person name="Pavan W.J."/>
            <person name="Pavesi G."/>
            <person name="Pesole G."/>
            <person name="Petrovsky N."/>
            <person name="Piazza S."/>
            <person name="Reed J."/>
            <person name="Reid J.F."/>
            <person name="Ring B.Z."/>
            <person name="Ringwald M."/>
            <person name="Rost B."/>
            <person name="Ruan Y."/>
            <person name="Salzberg S.L."/>
            <person name="Sandelin A."/>
            <person name="Schneider C."/>
            <person name="Schoenbach C."/>
            <person name="Sekiguchi K."/>
            <person name="Semple C.A."/>
            <person name="Seno S."/>
            <person name="Sessa L."/>
            <person name="Sheng Y."/>
            <person name="Shibata Y."/>
            <person name="Shimada H."/>
            <person name="Shimada K."/>
            <person name="Silva D."/>
            <person name="Sinclair B."/>
            <person name="Sperling S."/>
            <person name="Stupka E."/>
            <person name="Sugiura K."/>
            <person name="Sultana R."/>
            <person name="Takenaka Y."/>
            <person name="Taki K."/>
            <person name="Tammoja K."/>
            <person name="Tan S.L."/>
            <person name="Tang S."/>
            <person name="Taylor M.S."/>
            <person name="Tegner J."/>
            <person name="Teichmann S.A."/>
            <person name="Ueda H.R."/>
            <person name="van Nimwegen E."/>
            <person name="Verardo R."/>
            <person name="Wei C.L."/>
            <person name="Yagi K."/>
            <person name="Yamanishi H."/>
            <person name="Zabarovsky E."/>
            <person name="Zhu S."/>
            <person name="Zimmer A."/>
            <person name="Hide W."/>
            <person name="Bult C."/>
            <person name="Grimmond S.M."/>
            <person name="Teasdale R.D."/>
            <person name="Liu E.T."/>
            <person name="Brusic V."/>
            <person name="Quackenbush J."/>
            <person name="Wahlestedt C."/>
            <person name="Mattick J.S."/>
            <person name="Hume D.A."/>
            <person name="Kai C."/>
            <person name="Sasaki D."/>
            <person name="Tomaru Y."/>
            <person name="Fukuda S."/>
            <person name="Kanamori-Katayama M."/>
            <person name="Suzuki M."/>
            <person name="Aoki J."/>
            <person name="Arakawa T."/>
            <person name="Iida J."/>
            <person name="Imamura K."/>
            <person name="Itoh M."/>
            <person name="Kato T."/>
            <person name="Kawaji H."/>
            <person name="Kawagashira N."/>
            <person name="Kawashima T."/>
            <person name="Kojima M."/>
            <person name="Kondo S."/>
            <person name="Konno H."/>
            <person name="Nakano K."/>
            <person name="Ninomiya N."/>
            <person name="Nishio T."/>
            <person name="Okada M."/>
            <person name="Plessy C."/>
            <person name="Shibata K."/>
            <person name="Shiraki T."/>
            <person name="Suzuki S."/>
            <person name="Tagami M."/>
            <person name="Waki K."/>
            <person name="Watahiki A."/>
            <person name="Okamura-Oho Y."/>
            <person name="Suzuki H."/>
            <person name="Kawai J."/>
            <person name="Hayashizaki Y."/>
        </authorList>
    </citation>
    <scope>NUCLEOTIDE SEQUENCE [LARGE SCALE MRNA] OF 982-1403</scope>
    <source>
        <strain>C57BL/6J</strain>
        <tissue>Testis</tissue>
    </source>
</reference>
<reference key="3">
    <citation type="journal article" date="2004" name="Genome Res.">
        <title>The status, quality, and expansion of the NIH full-length cDNA project: the Mammalian Gene Collection (MGC).</title>
        <authorList>
            <consortium name="The MGC Project Team"/>
        </authorList>
    </citation>
    <scope>NUCLEOTIDE SEQUENCE [LARGE SCALE MRNA] OF 982-1403</scope>
    <source>
        <tissue>Brain</tissue>
    </source>
</reference>
<reference key="4">
    <citation type="journal article" date="2010" name="Cell">
        <title>A tissue-specific atlas of mouse protein phosphorylation and expression.</title>
        <authorList>
            <person name="Huttlin E.L."/>
            <person name="Jedrychowski M.P."/>
            <person name="Elias J.E."/>
            <person name="Goswami T."/>
            <person name="Rad R."/>
            <person name="Beausoleil S.A."/>
            <person name="Villen J."/>
            <person name="Haas W."/>
            <person name="Sowa M.E."/>
            <person name="Gygi S.P."/>
        </authorList>
    </citation>
    <scope>PHOSPHORYLATION [LARGE SCALE ANALYSIS] AT SER-775 AND SER-776</scope>
    <scope>IDENTIFICATION BY MASS SPECTROMETRY [LARGE SCALE ANALYSIS]</scope>
    <source>
        <tissue>Brain</tissue>
        <tissue>Testis</tissue>
    </source>
</reference>
<accession>Q9DAI6</accession>
<organism>
    <name type="scientific">Mus musculus</name>
    <name type="common">Mouse</name>
    <dbReference type="NCBI Taxonomy" id="10090"/>
    <lineage>
        <taxon>Eukaryota</taxon>
        <taxon>Metazoa</taxon>
        <taxon>Chordata</taxon>
        <taxon>Craniata</taxon>
        <taxon>Vertebrata</taxon>
        <taxon>Euteleostomi</taxon>
        <taxon>Mammalia</taxon>
        <taxon>Eutheria</taxon>
        <taxon>Euarchontoglires</taxon>
        <taxon>Glires</taxon>
        <taxon>Rodentia</taxon>
        <taxon>Myomorpha</taxon>
        <taxon>Muroidea</taxon>
        <taxon>Muridae</taxon>
        <taxon>Murinae</taxon>
        <taxon>Mus</taxon>
        <taxon>Mus</taxon>
    </lineage>
</organism>
<comment type="similarity">
    <text evidence="2">Belongs to the FAM135 family.</text>
</comment>
<comment type="sequence caution" evidence="2">
    <conflict type="erroneous initiation">
        <sequence resource="EMBL-CDS" id="AAI19175"/>
    </conflict>
</comment>
<comment type="sequence caution" evidence="2">
    <conflict type="erroneous initiation">
        <sequence resource="EMBL-CDS" id="BAB24252"/>
    </conflict>
</comment>
<dbReference type="EMBL" id="AC125528">
    <property type="status" value="NOT_ANNOTATED_CDS"/>
    <property type="molecule type" value="Genomic_DNA"/>
</dbReference>
<dbReference type="EMBL" id="AC157277">
    <property type="status" value="NOT_ANNOTATED_CDS"/>
    <property type="molecule type" value="Genomic_DNA"/>
</dbReference>
<dbReference type="EMBL" id="AC157602">
    <property type="status" value="NOT_ANNOTATED_CDS"/>
    <property type="molecule type" value="Genomic_DNA"/>
</dbReference>
<dbReference type="EMBL" id="AK005816">
    <property type="protein sequence ID" value="BAB24252.2"/>
    <property type="status" value="ALT_INIT"/>
    <property type="molecule type" value="mRNA"/>
</dbReference>
<dbReference type="EMBL" id="BC119174">
    <property type="protein sequence ID" value="AAI19175.1"/>
    <property type="status" value="ALT_INIT"/>
    <property type="molecule type" value="mRNA"/>
</dbReference>
<dbReference type="CCDS" id="CCDS49626.1"/>
<dbReference type="RefSeq" id="NP_808487.2">
    <property type="nucleotide sequence ID" value="NM_177819.3"/>
</dbReference>
<dbReference type="RefSeq" id="XP_006521456.1">
    <property type="nucleotide sequence ID" value="XM_006521393.4"/>
</dbReference>
<dbReference type="RefSeq" id="XP_006521458.1">
    <property type="nucleotide sequence ID" value="XM_006521395.4"/>
</dbReference>
<dbReference type="FunCoup" id="Q9DAI6">
    <property type="interactions" value="112"/>
</dbReference>
<dbReference type="STRING" id="10090.ENSMUSP00000022953"/>
<dbReference type="ESTHER" id="mouse-Q9DAI6">
    <property type="family name" value="Duf_676"/>
</dbReference>
<dbReference type="GlyGen" id="Q9DAI6">
    <property type="glycosylation" value="1 site, 1 O-linked glycan (1 site)"/>
</dbReference>
<dbReference type="iPTMnet" id="Q9DAI6"/>
<dbReference type="PhosphoSitePlus" id="Q9DAI6"/>
<dbReference type="SwissPalm" id="Q9DAI6"/>
<dbReference type="PaxDb" id="10090-ENSMUSP00000022953"/>
<dbReference type="ProteomicsDB" id="275566"/>
<dbReference type="Antibodypedia" id="14311">
    <property type="antibodies" value="108 antibodies from 17 providers"/>
</dbReference>
<dbReference type="DNASU" id="70363"/>
<dbReference type="Ensembl" id="ENSMUST00000022953.10">
    <property type="protein sequence ID" value="ENSMUSP00000022953.9"/>
    <property type="gene ID" value="ENSMUSG00000036800.9"/>
</dbReference>
<dbReference type="GeneID" id="70363"/>
<dbReference type="KEGG" id="mmu:70363"/>
<dbReference type="UCSC" id="uc011ztr.1">
    <property type="organism name" value="mouse"/>
</dbReference>
<dbReference type="AGR" id="MGI:1917613"/>
<dbReference type="CTD" id="51059"/>
<dbReference type="MGI" id="MGI:1917613">
    <property type="gene designation" value="Fam135b"/>
</dbReference>
<dbReference type="VEuPathDB" id="HostDB:ENSMUSG00000036800"/>
<dbReference type="eggNOG" id="KOG2205">
    <property type="taxonomic scope" value="Eukaryota"/>
</dbReference>
<dbReference type="GeneTree" id="ENSGT00940000156079"/>
<dbReference type="HOGENOM" id="CLU_003176_0_0_1"/>
<dbReference type="InParanoid" id="Q9DAI6"/>
<dbReference type="OMA" id="HFHPRKG"/>
<dbReference type="OrthoDB" id="273452at2759"/>
<dbReference type="PhylomeDB" id="Q9DAI6"/>
<dbReference type="TreeFam" id="TF314837"/>
<dbReference type="BioGRID-ORCS" id="70363">
    <property type="hits" value="2 hits in 76 CRISPR screens"/>
</dbReference>
<dbReference type="ChiTaRS" id="Fam135b">
    <property type="organism name" value="mouse"/>
</dbReference>
<dbReference type="PRO" id="PR:Q9DAI6"/>
<dbReference type="Proteomes" id="UP000000589">
    <property type="component" value="Chromosome 15"/>
</dbReference>
<dbReference type="RNAct" id="Q9DAI6">
    <property type="molecule type" value="protein"/>
</dbReference>
<dbReference type="Bgee" id="ENSMUSG00000036800">
    <property type="expression patterns" value="Expressed in spermatid and 34 other cell types or tissues"/>
</dbReference>
<dbReference type="ExpressionAtlas" id="Q9DAI6">
    <property type="expression patterns" value="baseline and differential"/>
</dbReference>
<dbReference type="FunFam" id="3.40.50.1820:FF:000004">
    <property type="entry name" value="Protein FAM135A isoform a"/>
    <property type="match status" value="1"/>
</dbReference>
<dbReference type="Gene3D" id="3.40.50.1820">
    <property type="entry name" value="alpha/beta hydrolase"/>
    <property type="match status" value="1"/>
</dbReference>
<dbReference type="InterPro" id="IPR029058">
    <property type="entry name" value="AB_hydrolase_fold"/>
</dbReference>
<dbReference type="InterPro" id="IPR022122">
    <property type="entry name" value="DUF3657"/>
</dbReference>
<dbReference type="InterPro" id="IPR007751">
    <property type="entry name" value="DUF676_lipase-like"/>
</dbReference>
<dbReference type="InterPro" id="IPR044294">
    <property type="entry name" value="Lipase-like"/>
</dbReference>
<dbReference type="PANTHER" id="PTHR12482">
    <property type="entry name" value="LIPASE ROG1-RELATED-RELATED"/>
    <property type="match status" value="1"/>
</dbReference>
<dbReference type="PANTHER" id="PTHR12482:SF3">
    <property type="entry name" value="PROTEIN FAM135B"/>
    <property type="match status" value="1"/>
</dbReference>
<dbReference type="Pfam" id="PF12394">
    <property type="entry name" value="DUF3657"/>
    <property type="match status" value="1"/>
</dbReference>
<dbReference type="Pfam" id="PF05057">
    <property type="entry name" value="DUF676"/>
    <property type="match status" value="1"/>
</dbReference>
<dbReference type="SUPFAM" id="SSF53474">
    <property type="entry name" value="alpha/beta-Hydrolases"/>
    <property type="match status" value="1"/>
</dbReference>
<gene>
    <name type="primary">Fam135b</name>
</gene>
<feature type="chain" id="PRO_0000314172" description="Protein FAM135B">
    <location>
        <begin position="1"/>
        <end position="1403"/>
    </location>
</feature>
<feature type="region of interest" description="Disordered" evidence="1">
    <location>
        <begin position="445"/>
        <end position="483"/>
    </location>
</feature>
<feature type="region of interest" description="Disordered" evidence="1">
    <location>
        <begin position="514"/>
        <end position="548"/>
    </location>
</feature>
<feature type="region of interest" description="Disordered" evidence="1">
    <location>
        <begin position="648"/>
        <end position="669"/>
    </location>
</feature>
<feature type="region of interest" description="Disordered" evidence="1">
    <location>
        <begin position="718"/>
        <end position="740"/>
    </location>
</feature>
<feature type="region of interest" description="Disordered" evidence="1">
    <location>
        <begin position="790"/>
        <end position="819"/>
    </location>
</feature>
<feature type="compositionally biased region" description="Basic and acidic residues" evidence="1">
    <location>
        <begin position="649"/>
        <end position="661"/>
    </location>
</feature>
<feature type="compositionally biased region" description="Polar residues" evidence="1">
    <location>
        <begin position="731"/>
        <end position="740"/>
    </location>
</feature>
<feature type="compositionally biased region" description="Polar residues" evidence="1">
    <location>
        <begin position="802"/>
        <end position="814"/>
    </location>
</feature>
<feature type="modified residue" description="Phosphoserine" evidence="3">
    <location>
        <position position="775"/>
    </location>
</feature>
<feature type="modified residue" description="Phosphoserine" evidence="3">
    <location>
        <position position="776"/>
    </location>
</feature>
<evidence type="ECO:0000256" key="1">
    <source>
        <dbReference type="SAM" id="MobiDB-lite"/>
    </source>
</evidence>
<evidence type="ECO:0000305" key="2"/>
<evidence type="ECO:0007744" key="3">
    <source>
    </source>
</evidence>